<protein>
    <recommendedName>
        <fullName evidence="1">Large ribosomal subunit protein bL32</fullName>
    </recommendedName>
    <alternativeName>
        <fullName evidence="3">50S ribosomal protein L32</fullName>
    </alternativeName>
</protein>
<feature type="chain" id="PRO_0000172441" description="Large ribosomal subunit protein bL32">
    <location>
        <begin position="1"/>
        <end position="64"/>
    </location>
</feature>
<feature type="region of interest" description="Disordered" evidence="2">
    <location>
        <begin position="1"/>
        <end position="35"/>
    </location>
</feature>
<gene>
    <name evidence="1" type="primary">rpmF</name>
    <name type="ordered locus">XCC1015</name>
</gene>
<comment type="similarity">
    <text evidence="1">Belongs to the bacterial ribosomal protein bL32 family.</text>
</comment>
<name>RL32_XANCP</name>
<proteinExistence type="inferred from homology"/>
<reference key="1">
    <citation type="journal article" date="2002" name="Nature">
        <title>Comparison of the genomes of two Xanthomonas pathogens with differing host specificities.</title>
        <authorList>
            <person name="da Silva A.C.R."/>
            <person name="Ferro J.A."/>
            <person name="Reinach F.C."/>
            <person name="Farah C.S."/>
            <person name="Furlan L.R."/>
            <person name="Quaggio R.B."/>
            <person name="Monteiro-Vitorello C.B."/>
            <person name="Van Sluys M.A."/>
            <person name="Almeida N.F. Jr."/>
            <person name="Alves L.M.C."/>
            <person name="do Amaral A.M."/>
            <person name="Bertolini M.C."/>
            <person name="Camargo L.E.A."/>
            <person name="Camarotte G."/>
            <person name="Cannavan F."/>
            <person name="Cardozo J."/>
            <person name="Chambergo F."/>
            <person name="Ciapina L.P."/>
            <person name="Cicarelli R.M.B."/>
            <person name="Coutinho L.L."/>
            <person name="Cursino-Santos J.R."/>
            <person name="El-Dorry H."/>
            <person name="Faria J.B."/>
            <person name="Ferreira A.J.S."/>
            <person name="Ferreira R.C.C."/>
            <person name="Ferro M.I.T."/>
            <person name="Formighieri E.F."/>
            <person name="Franco M.C."/>
            <person name="Greggio C.C."/>
            <person name="Gruber A."/>
            <person name="Katsuyama A.M."/>
            <person name="Kishi L.T."/>
            <person name="Leite R.P."/>
            <person name="Lemos E.G.M."/>
            <person name="Lemos M.V.F."/>
            <person name="Locali E.C."/>
            <person name="Machado M.A."/>
            <person name="Madeira A.M.B.N."/>
            <person name="Martinez-Rossi N.M."/>
            <person name="Martins E.C."/>
            <person name="Meidanis J."/>
            <person name="Menck C.F.M."/>
            <person name="Miyaki C.Y."/>
            <person name="Moon D.H."/>
            <person name="Moreira L.M."/>
            <person name="Novo M.T.M."/>
            <person name="Okura V.K."/>
            <person name="Oliveira M.C."/>
            <person name="Oliveira V.R."/>
            <person name="Pereira H.A."/>
            <person name="Rossi A."/>
            <person name="Sena J.A.D."/>
            <person name="Silva C."/>
            <person name="de Souza R.F."/>
            <person name="Spinola L.A.F."/>
            <person name="Takita M.A."/>
            <person name="Tamura R.E."/>
            <person name="Teixeira E.C."/>
            <person name="Tezza R.I.D."/>
            <person name="Trindade dos Santos M."/>
            <person name="Truffi D."/>
            <person name="Tsai S.M."/>
            <person name="White F.F."/>
            <person name="Setubal J.C."/>
            <person name="Kitajima J.P."/>
        </authorList>
    </citation>
    <scope>NUCLEOTIDE SEQUENCE [LARGE SCALE GENOMIC DNA]</scope>
    <source>
        <strain>ATCC 33913 / DSM 3586 / NCPPB 528 / LMG 568 / P 25</strain>
    </source>
</reference>
<keyword id="KW-1185">Reference proteome</keyword>
<keyword id="KW-0687">Ribonucleoprotein</keyword>
<keyword id="KW-0689">Ribosomal protein</keyword>
<evidence type="ECO:0000255" key="1">
    <source>
        <dbReference type="HAMAP-Rule" id="MF_00340"/>
    </source>
</evidence>
<evidence type="ECO:0000256" key="2">
    <source>
        <dbReference type="SAM" id="MobiDB-lite"/>
    </source>
</evidence>
<evidence type="ECO:0000305" key="3"/>
<dbReference type="EMBL" id="AE008922">
    <property type="protein sequence ID" value="AAM40315.1"/>
    <property type="molecule type" value="Genomic_DNA"/>
</dbReference>
<dbReference type="RefSeq" id="NP_636391.1">
    <property type="nucleotide sequence ID" value="NC_003902.1"/>
</dbReference>
<dbReference type="RefSeq" id="WP_010368401.1">
    <property type="nucleotide sequence ID" value="NC_003902.1"/>
</dbReference>
<dbReference type="SMR" id="Q8PBV2"/>
<dbReference type="STRING" id="190485.XCC1015"/>
<dbReference type="EnsemblBacteria" id="AAM40315">
    <property type="protein sequence ID" value="AAM40315"/>
    <property type="gene ID" value="XCC1015"/>
</dbReference>
<dbReference type="GeneID" id="97210654"/>
<dbReference type="KEGG" id="xcc:XCC1015"/>
<dbReference type="PATRIC" id="fig|190485.4.peg.1080"/>
<dbReference type="eggNOG" id="COG0333">
    <property type="taxonomic scope" value="Bacteria"/>
</dbReference>
<dbReference type="HOGENOM" id="CLU_129084_2_1_6"/>
<dbReference type="OrthoDB" id="9801927at2"/>
<dbReference type="PRO" id="PR:Q8PBV2"/>
<dbReference type="Proteomes" id="UP000001010">
    <property type="component" value="Chromosome"/>
</dbReference>
<dbReference type="GO" id="GO:0022625">
    <property type="term" value="C:cytosolic large ribosomal subunit"/>
    <property type="evidence" value="ECO:0000318"/>
    <property type="project" value="GO_Central"/>
</dbReference>
<dbReference type="GO" id="GO:0003735">
    <property type="term" value="F:structural constituent of ribosome"/>
    <property type="evidence" value="ECO:0000318"/>
    <property type="project" value="GO_Central"/>
</dbReference>
<dbReference type="GO" id="GO:0006412">
    <property type="term" value="P:translation"/>
    <property type="evidence" value="ECO:0007669"/>
    <property type="project" value="UniProtKB-UniRule"/>
</dbReference>
<dbReference type="HAMAP" id="MF_00340">
    <property type="entry name" value="Ribosomal_bL32"/>
    <property type="match status" value="1"/>
</dbReference>
<dbReference type="InterPro" id="IPR002677">
    <property type="entry name" value="Ribosomal_bL32"/>
</dbReference>
<dbReference type="InterPro" id="IPR044957">
    <property type="entry name" value="Ribosomal_bL32_bact"/>
</dbReference>
<dbReference type="InterPro" id="IPR011332">
    <property type="entry name" value="Ribosomal_zn-bd"/>
</dbReference>
<dbReference type="NCBIfam" id="TIGR01031">
    <property type="entry name" value="rpmF_bact"/>
    <property type="match status" value="1"/>
</dbReference>
<dbReference type="PANTHER" id="PTHR35534">
    <property type="entry name" value="50S RIBOSOMAL PROTEIN L32"/>
    <property type="match status" value="1"/>
</dbReference>
<dbReference type="PANTHER" id="PTHR35534:SF1">
    <property type="entry name" value="LARGE RIBOSOMAL SUBUNIT PROTEIN BL32"/>
    <property type="match status" value="1"/>
</dbReference>
<dbReference type="Pfam" id="PF01783">
    <property type="entry name" value="Ribosomal_L32p"/>
    <property type="match status" value="1"/>
</dbReference>
<dbReference type="SUPFAM" id="SSF57829">
    <property type="entry name" value="Zn-binding ribosomal proteins"/>
    <property type="match status" value="1"/>
</dbReference>
<organism>
    <name type="scientific">Xanthomonas campestris pv. campestris (strain ATCC 33913 / DSM 3586 / NCPPB 528 / LMG 568 / P 25)</name>
    <dbReference type="NCBI Taxonomy" id="190485"/>
    <lineage>
        <taxon>Bacteria</taxon>
        <taxon>Pseudomonadati</taxon>
        <taxon>Pseudomonadota</taxon>
        <taxon>Gammaproteobacteria</taxon>
        <taxon>Lysobacterales</taxon>
        <taxon>Lysobacteraceae</taxon>
        <taxon>Xanthomonas</taxon>
    </lineage>
</organism>
<sequence>MAVQKSRVTPSRRGQRRSHDALTAKQLSTDPTSGEIHLRHHITADGYYRGKKVITTKSSAVQED</sequence>
<accession>Q8PBV2</accession>